<gene>
    <name evidence="1" type="primary">selU</name>
    <name type="ordered locus">SG0524</name>
</gene>
<accession>B5R637</accession>
<protein>
    <recommendedName>
        <fullName evidence="1">tRNA 2-selenouridine synthase</fullName>
        <ecNumber evidence="1">2.9.1.3</ecNumber>
    </recommendedName>
</protein>
<keyword id="KW-0711">Selenium</keyword>
<keyword id="KW-0808">Transferase</keyword>
<reference key="1">
    <citation type="journal article" date="2008" name="Genome Res.">
        <title>Comparative genome analysis of Salmonella enteritidis PT4 and Salmonella gallinarum 287/91 provides insights into evolutionary and host adaptation pathways.</title>
        <authorList>
            <person name="Thomson N.R."/>
            <person name="Clayton D.J."/>
            <person name="Windhorst D."/>
            <person name="Vernikos G."/>
            <person name="Davidson S."/>
            <person name="Churcher C."/>
            <person name="Quail M.A."/>
            <person name="Stevens M."/>
            <person name="Jones M.A."/>
            <person name="Watson M."/>
            <person name="Barron A."/>
            <person name="Layton A."/>
            <person name="Pickard D."/>
            <person name="Kingsley R.A."/>
            <person name="Bignell A."/>
            <person name="Clark L."/>
            <person name="Harris B."/>
            <person name="Ormond D."/>
            <person name="Abdellah Z."/>
            <person name="Brooks K."/>
            <person name="Cherevach I."/>
            <person name="Chillingworth T."/>
            <person name="Woodward J."/>
            <person name="Norberczak H."/>
            <person name="Lord A."/>
            <person name="Arrowsmith C."/>
            <person name="Jagels K."/>
            <person name="Moule S."/>
            <person name="Mungall K."/>
            <person name="Saunders M."/>
            <person name="Whitehead S."/>
            <person name="Chabalgoity J.A."/>
            <person name="Maskell D."/>
            <person name="Humphreys T."/>
            <person name="Roberts M."/>
            <person name="Barrow P.A."/>
            <person name="Dougan G."/>
            <person name="Parkhill J."/>
        </authorList>
    </citation>
    <scope>NUCLEOTIDE SEQUENCE [LARGE SCALE GENOMIC DNA]</scope>
    <source>
        <strain>287/91 / NCTC 13346</strain>
    </source>
</reference>
<evidence type="ECO:0000255" key="1">
    <source>
        <dbReference type="HAMAP-Rule" id="MF_01622"/>
    </source>
</evidence>
<comment type="function">
    <text evidence="1">Involved in the post-transcriptional modification of the uridine at the wobble position (U34) of tRNA(Lys), tRNA(Glu) and tRNA(Gln). Catalyzes the conversion of 2-thiouridine (S2U-RNA) to 2-selenouridine (Se2U-RNA). Acts in a two-step process involving geranylation of 2-thiouridine (S2U) to S-geranyl-2-thiouridine (geS2U) and subsequent selenation of the latter derivative to 2-selenouridine (Se2U) in the tRNA chain.</text>
</comment>
<comment type="catalytic activity">
    <reaction evidence="1">
        <text>5-methylaminomethyl-2-thiouridine(34) in tRNA + selenophosphate + (2E)-geranyl diphosphate + H2O + H(+) = 5-methylaminomethyl-2-selenouridine(34) in tRNA + (2E)-thiogeraniol + phosphate + diphosphate</text>
        <dbReference type="Rhea" id="RHEA:42716"/>
        <dbReference type="Rhea" id="RHEA-COMP:10195"/>
        <dbReference type="Rhea" id="RHEA-COMP:10196"/>
        <dbReference type="ChEBI" id="CHEBI:15377"/>
        <dbReference type="ChEBI" id="CHEBI:15378"/>
        <dbReference type="ChEBI" id="CHEBI:16144"/>
        <dbReference type="ChEBI" id="CHEBI:33019"/>
        <dbReference type="ChEBI" id="CHEBI:43474"/>
        <dbReference type="ChEBI" id="CHEBI:58057"/>
        <dbReference type="ChEBI" id="CHEBI:74455"/>
        <dbReference type="ChEBI" id="CHEBI:82743"/>
        <dbReference type="ChEBI" id="CHEBI:143703"/>
        <dbReference type="EC" id="2.9.1.3"/>
    </reaction>
    <physiologicalReaction direction="left-to-right" evidence="1">
        <dbReference type="Rhea" id="RHEA:42717"/>
    </physiologicalReaction>
</comment>
<comment type="catalytic activity">
    <reaction evidence="1">
        <text>5-methylaminomethyl-2-thiouridine(34) in tRNA + (2E)-geranyl diphosphate = 5-methylaminomethyl-S-(2E)-geranyl-thiouridine(34) in tRNA + diphosphate</text>
        <dbReference type="Rhea" id="RHEA:14085"/>
        <dbReference type="Rhea" id="RHEA-COMP:10195"/>
        <dbReference type="Rhea" id="RHEA-COMP:14654"/>
        <dbReference type="ChEBI" id="CHEBI:33019"/>
        <dbReference type="ChEBI" id="CHEBI:58057"/>
        <dbReference type="ChEBI" id="CHEBI:74455"/>
        <dbReference type="ChEBI" id="CHEBI:140632"/>
    </reaction>
    <physiologicalReaction direction="left-to-right" evidence="1">
        <dbReference type="Rhea" id="RHEA:14086"/>
    </physiologicalReaction>
</comment>
<comment type="catalytic activity">
    <reaction evidence="1">
        <text>5-methylaminomethyl-S-(2E)-geranyl-thiouridine(34) in tRNA + selenophosphate + H(+) = 5-methylaminomethyl-2-(Se-phospho)selenouridine(34) in tRNA + (2E)-thiogeraniol</text>
        <dbReference type="Rhea" id="RHEA:60172"/>
        <dbReference type="Rhea" id="RHEA-COMP:14654"/>
        <dbReference type="Rhea" id="RHEA-COMP:15523"/>
        <dbReference type="ChEBI" id="CHEBI:15378"/>
        <dbReference type="ChEBI" id="CHEBI:16144"/>
        <dbReference type="ChEBI" id="CHEBI:140632"/>
        <dbReference type="ChEBI" id="CHEBI:143702"/>
        <dbReference type="ChEBI" id="CHEBI:143703"/>
    </reaction>
    <physiologicalReaction direction="left-to-right" evidence="1">
        <dbReference type="Rhea" id="RHEA:60173"/>
    </physiologicalReaction>
</comment>
<comment type="catalytic activity">
    <reaction evidence="1">
        <text>5-methylaminomethyl-2-(Se-phospho)selenouridine(34) in tRNA + H2O = 5-methylaminomethyl-2-selenouridine(34) in tRNA + phosphate</text>
        <dbReference type="Rhea" id="RHEA:60176"/>
        <dbReference type="Rhea" id="RHEA-COMP:10196"/>
        <dbReference type="Rhea" id="RHEA-COMP:15523"/>
        <dbReference type="ChEBI" id="CHEBI:15377"/>
        <dbReference type="ChEBI" id="CHEBI:43474"/>
        <dbReference type="ChEBI" id="CHEBI:82743"/>
        <dbReference type="ChEBI" id="CHEBI:143702"/>
    </reaction>
    <physiologicalReaction direction="left-to-right" evidence="1">
        <dbReference type="Rhea" id="RHEA:60177"/>
    </physiologicalReaction>
</comment>
<comment type="subunit">
    <text evidence="1">Monomer.</text>
</comment>
<comment type="similarity">
    <text evidence="1">Belongs to the SelU family.</text>
</comment>
<organism>
    <name type="scientific">Salmonella gallinarum (strain 287/91 / NCTC 13346)</name>
    <dbReference type="NCBI Taxonomy" id="550538"/>
    <lineage>
        <taxon>Bacteria</taxon>
        <taxon>Pseudomonadati</taxon>
        <taxon>Pseudomonadota</taxon>
        <taxon>Gammaproteobacteria</taxon>
        <taxon>Enterobacterales</taxon>
        <taxon>Enterobacteriaceae</taxon>
        <taxon>Salmonella</taxon>
    </lineage>
</organism>
<dbReference type="EC" id="2.9.1.3" evidence="1"/>
<dbReference type="EMBL" id="AM933173">
    <property type="protein sequence ID" value="CAR36422.1"/>
    <property type="molecule type" value="Genomic_DNA"/>
</dbReference>
<dbReference type="SMR" id="B5R637"/>
<dbReference type="KEGG" id="seg:SG0524"/>
<dbReference type="HOGENOM" id="CLU_043456_1_0_6"/>
<dbReference type="Proteomes" id="UP000008321">
    <property type="component" value="Chromosome"/>
</dbReference>
<dbReference type="GO" id="GO:0016765">
    <property type="term" value="F:transferase activity, transferring alkyl or aryl (other than methyl) groups"/>
    <property type="evidence" value="ECO:0007669"/>
    <property type="project" value="UniProtKB-UniRule"/>
</dbReference>
<dbReference type="GO" id="GO:0043828">
    <property type="term" value="F:tRNA 2-selenouridine synthase activity"/>
    <property type="evidence" value="ECO:0007669"/>
    <property type="project" value="UniProtKB-EC"/>
</dbReference>
<dbReference type="GO" id="GO:0002098">
    <property type="term" value="P:tRNA wobble uridine modification"/>
    <property type="evidence" value="ECO:0007669"/>
    <property type="project" value="UniProtKB-UniRule"/>
</dbReference>
<dbReference type="CDD" id="cd01520">
    <property type="entry name" value="RHOD_YbbB"/>
    <property type="match status" value="1"/>
</dbReference>
<dbReference type="FunFam" id="3.40.250.10:FF:000009">
    <property type="entry name" value="tRNA 2-selenouridine/geranyl-2-thiouridine synthase"/>
    <property type="match status" value="1"/>
</dbReference>
<dbReference type="Gene3D" id="3.40.250.10">
    <property type="entry name" value="Rhodanese-like domain"/>
    <property type="match status" value="1"/>
</dbReference>
<dbReference type="HAMAP" id="MF_01622">
    <property type="entry name" value="tRNA_sel_U_synth"/>
    <property type="match status" value="1"/>
</dbReference>
<dbReference type="InterPro" id="IPR001763">
    <property type="entry name" value="Rhodanese-like_dom"/>
</dbReference>
<dbReference type="InterPro" id="IPR036873">
    <property type="entry name" value="Rhodanese-like_dom_sf"/>
</dbReference>
<dbReference type="InterPro" id="IPR017582">
    <property type="entry name" value="SelU"/>
</dbReference>
<dbReference type="NCBIfam" id="NF008749">
    <property type="entry name" value="PRK11784.1-1"/>
    <property type="match status" value="1"/>
</dbReference>
<dbReference type="NCBIfam" id="NF008751">
    <property type="entry name" value="PRK11784.1-3"/>
    <property type="match status" value="1"/>
</dbReference>
<dbReference type="NCBIfam" id="TIGR03167">
    <property type="entry name" value="tRNA_sel_U_synt"/>
    <property type="match status" value="1"/>
</dbReference>
<dbReference type="PANTHER" id="PTHR30401">
    <property type="entry name" value="TRNA 2-SELENOURIDINE SYNTHASE"/>
    <property type="match status" value="1"/>
</dbReference>
<dbReference type="PANTHER" id="PTHR30401:SF0">
    <property type="entry name" value="TRNA 2-SELENOURIDINE SYNTHASE"/>
    <property type="match status" value="1"/>
</dbReference>
<dbReference type="Pfam" id="PF00581">
    <property type="entry name" value="Rhodanese"/>
    <property type="match status" value="1"/>
</dbReference>
<dbReference type="SMART" id="SM00450">
    <property type="entry name" value="RHOD"/>
    <property type="match status" value="1"/>
</dbReference>
<dbReference type="SUPFAM" id="SSF52821">
    <property type="entry name" value="Rhodanese/Cell cycle control phosphatase"/>
    <property type="match status" value="1"/>
</dbReference>
<dbReference type="PROSITE" id="PS50206">
    <property type="entry name" value="RHODANESE_3"/>
    <property type="match status" value="1"/>
</dbReference>
<proteinExistence type="inferred from homology"/>
<name>SELU_SALG2</name>
<sequence>MQDRQKAQDYRALLLADTPLIDVRAPIEFEQGAMPGAINLPLMIDDERAAVGTCYKRQGADAALALGHRLVCGDIRQQRLEAWKAAYQRFPNGYLCCARGGQRSHIVQRWLQETGIDCPLIEGGYKALRQTAIQATWQLAQKPILLIGGCTGSGKTQLVRQQPNGVDLEGLARHRGSSFGRTLNPQLSQASFENKLAVELLKINARQTLKRWVLEDEGRTIGANHLPECLRERMAQAPIAVVEDPFALRLERLREEYFIRMHHDFTHAYGDEAGWQAYSEYLHHGLFAIRRRLGLQRFAELTDTLDRALAEQLSSGSTDGHMAWLVPLLNEYYDPMYRYQLEKKAANIVFRGTWQEVANWLKAQ</sequence>
<feature type="chain" id="PRO_1000186082" description="tRNA 2-selenouridine synthase">
    <location>
        <begin position="1"/>
        <end position="364"/>
    </location>
</feature>
<feature type="domain" description="Rhodanese" evidence="1">
    <location>
        <begin position="14"/>
        <end position="137"/>
    </location>
</feature>
<feature type="active site" description="S-selanylcysteine intermediate" evidence="1">
    <location>
        <position position="97"/>
    </location>
</feature>